<gene>
    <name evidence="1" type="primary">psbT</name>
    <name type="synonym">ycf8</name>
    <name type="ordered locus">AtCg00690</name>
</gene>
<accession>P61839</accession>
<accession>P37259</accession>
<organism>
    <name type="scientific">Arabidopsis thaliana</name>
    <name type="common">Mouse-ear cress</name>
    <dbReference type="NCBI Taxonomy" id="3702"/>
    <lineage>
        <taxon>Eukaryota</taxon>
        <taxon>Viridiplantae</taxon>
        <taxon>Streptophyta</taxon>
        <taxon>Embryophyta</taxon>
        <taxon>Tracheophyta</taxon>
        <taxon>Spermatophyta</taxon>
        <taxon>Magnoliopsida</taxon>
        <taxon>eudicotyledons</taxon>
        <taxon>Gunneridae</taxon>
        <taxon>Pentapetalae</taxon>
        <taxon>rosids</taxon>
        <taxon>malvids</taxon>
        <taxon>Brassicales</taxon>
        <taxon>Brassicaceae</taxon>
        <taxon>Camelineae</taxon>
        <taxon>Arabidopsis</taxon>
    </lineage>
</organism>
<reference key="1">
    <citation type="submission" date="2000-02" db="EMBL/GenBank/DDBJ databases">
        <title>Long branches in the seed plants and the root of the angiosperms.</title>
        <authorList>
            <person name="Graham S.W."/>
            <person name="Reeves P.A."/>
            <person name="Burns A."/>
            <person name="Olmstead R.G."/>
        </authorList>
    </citation>
    <scope>NUCLEOTIDE SEQUENCE [GENOMIC DNA]</scope>
</reference>
<reference key="2">
    <citation type="journal article" date="1999" name="DNA Res.">
        <title>Complete structure of the chloroplast genome of Arabidopsis thaliana.</title>
        <authorList>
            <person name="Sato S."/>
            <person name="Nakamura Y."/>
            <person name="Kaneko T."/>
            <person name="Asamizu E."/>
            <person name="Tabata S."/>
        </authorList>
    </citation>
    <scope>NUCLEOTIDE SEQUENCE [LARGE SCALE GENOMIC DNA]</scope>
    <source>
        <strain>cv. Columbia</strain>
    </source>
</reference>
<geneLocation type="chloroplast"/>
<feature type="chain" id="PRO_0000217900" description="Photosystem II reaction center protein T">
    <location>
        <begin position="1"/>
        <end position="33"/>
    </location>
</feature>
<feature type="transmembrane region" description="Helical" evidence="1">
    <location>
        <begin position="3"/>
        <end position="23"/>
    </location>
</feature>
<feature type="helix" evidence="2">
    <location>
        <begin position="2"/>
        <end position="22"/>
    </location>
</feature>
<keyword id="KW-0002">3D-structure</keyword>
<keyword id="KW-0150">Chloroplast</keyword>
<keyword id="KW-0472">Membrane</keyword>
<keyword id="KW-0602">Photosynthesis</keyword>
<keyword id="KW-0604">Photosystem II</keyword>
<keyword id="KW-0934">Plastid</keyword>
<keyword id="KW-1185">Reference proteome</keyword>
<keyword id="KW-0793">Thylakoid</keyword>
<keyword id="KW-0812">Transmembrane</keyword>
<keyword id="KW-1133">Transmembrane helix</keyword>
<name>PSBT_ARATH</name>
<dbReference type="EMBL" id="AY007458">
    <property type="protein sequence ID" value="AAG12344.1"/>
    <property type="molecule type" value="Genomic_DNA"/>
</dbReference>
<dbReference type="EMBL" id="AP000423">
    <property type="protein sequence ID" value="BAA84412.1"/>
    <property type="molecule type" value="Genomic_DNA"/>
</dbReference>
<dbReference type="RefSeq" id="NP_051085.1">
    <property type="nucleotide sequence ID" value="NC_000932.1"/>
</dbReference>
<dbReference type="PDB" id="5MDX">
    <property type="method" value="EM"/>
    <property type="resolution" value="5.30 A"/>
    <property type="chains" value="T/t=1-33"/>
</dbReference>
<dbReference type="PDB" id="7OUI">
    <property type="method" value="EM"/>
    <property type="resolution" value="2.79 A"/>
    <property type="chains" value="T/t=1-33"/>
</dbReference>
<dbReference type="PDBsum" id="5MDX"/>
<dbReference type="PDBsum" id="7OUI"/>
<dbReference type="EMDB" id="EMD-13078"/>
<dbReference type="EMDB" id="EMD-3491"/>
<dbReference type="SMR" id="P61839"/>
<dbReference type="BioGRID" id="29937">
    <property type="interactions" value="1"/>
</dbReference>
<dbReference type="FunCoup" id="P61839">
    <property type="interactions" value="36"/>
</dbReference>
<dbReference type="IntAct" id="P61839">
    <property type="interactions" value="1"/>
</dbReference>
<dbReference type="STRING" id="3702.P61839"/>
<dbReference type="TCDB" id="3.E.2.2.3">
    <property type="family name" value="the photosynthetic reaction center (prc) family"/>
</dbReference>
<dbReference type="PaxDb" id="3702-ATCG00690.1"/>
<dbReference type="EnsemblPlants" id="ATCG00690.1">
    <property type="protein sequence ID" value="ATCG00690.1"/>
    <property type="gene ID" value="ATCG00690"/>
</dbReference>
<dbReference type="GeneID" id="844731"/>
<dbReference type="Gramene" id="ATCG00690.1">
    <property type="protein sequence ID" value="ATCG00690.1"/>
    <property type="gene ID" value="ATCG00690"/>
</dbReference>
<dbReference type="KEGG" id="ath:ArthCp050"/>
<dbReference type="Araport" id="ATCG00690"/>
<dbReference type="TAIR" id="ATCG00690">
    <property type="gene designation" value="PSBT"/>
</dbReference>
<dbReference type="eggNOG" id="ENOG502SCPW">
    <property type="taxonomic scope" value="Eukaryota"/>
</dbReference>
<dbReference type="HOGENOM" id="CLU_217078_0_0_1"/>
<dbReference type="InParanoid" id="P61839"/>
<dbReference type="PRO" id="PR:P61839"/>
<dbReference type="Proteomes" id="UP000006548">
    <property type="component" value="Chloroplast Pltd"/>
</dbReference>
<dbReference type="ExpressionAtlas" id="P61839">
    <property type="expression patterns" value="baseline and differential"/>
</dbReference>
<dbReference type="GO" id="GO:0009535">
    <property type="term" value="C:chloroplast thylakoid membrane"/>
    <property type="evidence" value="ECO:0007005"/>
    <property type="project" value="TAIR"/>
</dbReference>
<dbReference type="GO" id="GO:0009539">
    <property type="term" value="C:photosystem II reaction center"/>
    <property type="evidence" value="ECO:0007669"/>
    <property type="project" value="InterPro"/>
</dbReference>
<dbReference type="GO" id="GO:0015979">
    <property type="term" value="P:photosynthesis"/>
    <property type="evidence" value="ECO:0007669"/>
    <property type="project" value="UniProtKB-UniRule"/>
</dbReference>
<dbReference type="HAMAP" id="MF_00808">
    <property type="entry name" value="PSII_PsbT"/>
    <property type="match status" value="1"/>
</dbReference>
<dbReference type="InterPro" id="IPR001743">
    <property type="entry name" value="PSII_PsbT"/>
</dbReference>
<dbReference type="InterPro" id="IPR037268">
    <property type="entry name" value="PSII_PsbT_sf"/>
</dbReference>
<dbReference type="PANTHER" id="PTHR36411">
    <property type="match status" value="1"/>
</dbReference>
<dbReference type="PANTHER" id="PTHR36411:SF2">
    <property type="entry name" value="PHOTOSYSTEM II REACTION CENTER PROTEIN T"/>
    <property type="match status" value="1"/>
</dbReference>
<dbReference type="Pfam" id="PF01405">
    <property type="entry name" value="PsbT"/>
    <property type="match status" value="1"/>
</dbReference>
<dbReference type="SUPFAM" id="SSF161029">
    <property type="entry name" value="Photosystem II reaction center protein T, PsbT"/>
    <property type="match status" value="1"/>
</dbReference>
<protein>
    <recommendedName>
        <fullName evidence="1">Photosystem II reaction center protein T</fullName>
        <shortName evidence="1">PSII-T</shortName>
    </recommendedName>
</protein>
<proteinExistence type="evidence at protein level"/>
<sequence length="33" mass="3822">MEALVYTFLLVSTLGIIFFAIFFREPPKISTKK</sequence>
<evidence type="ECO:0000255" key="1">
    <source>
        <dbReference type="HAMAP-Rule" id="MF_00808"/>
    </source>
</evidence>
<evidence type="ECO:0007829" key="2">
    <source>
        <dbReference type="PDB" id="7OUI"/>
    </source>
</evidence>
<comment type="function">
    <text evidence="1">Found at the monomer-monomer interface of the photosystem II (PS II) dimer, plays a role in assembly and dimerization of PSII. PSII is a light-driven water plastoquinone oxidoreductase, using light energy to abstract electrons from H(2)O, generating a proton gradient subsequently used for ATP formation.</text>
</comment>
<comment type="subunit">
    <text evidence="1">PSII is composed of 1 copy each of membrane proteins PsbA, PsbB, PsbC, PsbD, PsbE, PsbF, PsbH, PsbI, PsbJ, PsbK, PsbL, PsbM, PsbT, PsbY, PsbZ, Psb30/Ycf12, at least 3 peripheral proteins of the oxygen-evolving complex and a large number of cofactors. It forms dimeric complexes.</text>
</comment>
<comment type="subcellular location">
    <subcellularLocation>
        <location evidence="1">Plastid</location>
        <location evidence="1">Chloroplast thylakoid membrane</location>
        <topology evidence="1">Single-pass membrane protein</topology>
    </subcellularLocation>
</comment>
<comment type="similarity">
    <text evidence="1">Belongs to the PsbT family.</text>
</comment>